<dbReference type="EC" id="2.7.8.-" evidence="1 3"/>
<dbReference type="EMBL" id="U00096">
    <property type="protein sequence ID" value="AAC73876.1"/>
    <property type="molecule type" value="Genomic_DNA"/>
</dbReference>
<dbReference type="EMBL" id="AP009048">
    <property type="protein sequence ID" value="BAA35448.1"/>
    <property type="molecule type" value="Genomic_DNA"/>
</dbReference>
<dbReference type="PIR" id="E64815">
    <property type="entry name" value="E64815"/>
</dbReference>
<dbReference type="RefSeq" id="NP_415310.1">
    <property type="nucleotide sequence ID" value="NC_000913.3"/>
</dbReference>
<dbReference type="RefSeq" id="WP_000650337.1">
    <property type="nucleotide sequence ID" value="NZ_SSZK01000002.1"/>
</dbReference>
<dbReference type="SMR" id="P0AA84"/>
<dbReference type="BioGRID" id="4259959">
    <property type="interactions" value="392"/>
</dbReference>
<dbReference type="FunCoup" id="P0AA84">
    <property type="interactions" value="48"/>
</dbReference>
<dbReference type="IntAct" id="P0AA84">
    <property type="interactions" value="5"/>
</dbReference>
<dbReference type="STRING" id="511145.b0789"/>
<dbReference type="jPOST" id="P0AA84"/>
<dbReference type="PaxDb" id="511145-b0789"/>
<dbReference type="EnsemblBacteria" id="AAC73876">
    <property type="protein sequence ID" value="AAC73876"/>
    <property type="gene ID" value="b0789"/>
</dbReference>
<dbReference type="GeneID" id="75204904"/>
<dbReference type="GeneID" id="945409"/>
<dbReference type="KEGG" id="ecj:JW0772"/>
<dbReference type="KEGG" id="eco:b0789"/>
<dbReference type="KEGG" id="ecoc:C3026_04995"/>
<dbReference type="PATRIC" id="fig|1411691.4.peg.1489"/>
<dbReference type="EchoBASE" id="EB3435"/>
<dbReference type="eggNOG" id="COG1502">
    <property type="taxonomic scope" value="Bacteria"/>
</dbReference>
<dbReference type="HOGENOM" id="CLU_038053_0_0_6"/>
<dbReference type="InParanoid" id="P0AA84"/>
<dbReference type="OMA" id="INYSADH"/>
<dbReference type="OrthoDB" id="9762009at2"/>
<dbReference type="PhylomeDB" id="P0AA84"/>
<dbReference type="BioCyc" id="EcoCyc:G6406-MONOMER"/>
<dbReference type="BioCyc" id="MetaCyc:G6406-MONOMER"/>
<dbReference type="BRENDA" id="2.7.8.B10">
    <property type="organism ID" value="2026"/>
</dbReference>
<dbReference type="PRO" id="PR:P0AA84"/>
<dbReference type="Proteomes" id="UP000000625">
    <property type="component" value="Chromosome"/>
</dbReference>
<dbReference type="GO" id="GO:0016020">
    <property type="term" value="C:membrane"/>
    <property type="evidence" value="ECO:0000314"/>
    <property type="project" value="EcoCyc"/>
</dbReference>
<dbReference type="GO" id="GO:0005886">
    <property type="term" value="C:plasma membrane"/>
    <property type="evidence" value="ECO:0007669"/>
    <property type="project" value="UniProtKB-SubCell"/>
</dbReference>
<dbReference type="GO" id="GO:0008808">
    <property type="term" value="F:cardiolipin synthase activity"/>
    <property type="evidence" value="ECO:0000314"/>
    <property type="project" value="EcoCyc"/>
</dbReference>
<dbReference type="GO" id="GO:0004630">
    <property type="term" value="F:phospholipase D activity"/>
    <property type="evidence" value="ECO:0000314"/>
    <property type="project" value="EcoliWiki"/>
</dbReference>
<dbReference type="GO" id="GO:0032049">
    <property type="term" value="P:cardiolipin biosynthetic process"/>
    <property type="evidence" value="ECO:0000315"/>
    <property type="project" value="EcoCyc"/>
</dbReference>
<dbReference type="CDD" id="cd09110">
    <property type="entry name" value="PLDc_CLS_1"/>
    <property type="match status" value="1"/>
</dbReference>
<dbReference type="CDD" id="cd09159">
    <property type="entry name" value="PLDc_ybhO_like_2"/>
    <property type="match status" value="1"/>
</dbReference>
<dbReference type="FunFam" id="3.30.870.10:FF:000015">
    <property type="entry name" value="Cardiolipin synthase B"/>
    <property type="match status" value="1"/>
</dbReference>
<dbReference type="FunFam" id="3.30.870.10:FF:000016">
    <property type="entry name" value="Cardiolipin synthase B"/>
    <property type="match status" value="1"/>
</dbReference>
<dbReference type="Gene3D" id="3.30.870.10">
    <property type="entry name" value="Endonuclease Chain A"/>
    <property type="match status" value="2"/>
</dbReference>
<dbReference type="HAMAP" id="MF_01917">
    <property type="entry name" value="Cardiolipin_synth_ClsB"/>
    <property type="match status" value="1"/>
</dbReference>
<dbReference type="InterPro" id="IPR030872">
    <property type="entry name" value="Cardiolipin_synth_ClsB"/>
</dbReference>
<dbReference type="InterPro" id="IPR025202">
    <property type="entry name" value="PLD-like_dom"/>
</dbReference>
<dbReference type="InterPro" id="IPR001736">
    <property type="entry name" value="PLipase_D/transphosphatidylase"/>
</dbReference>
<dbReference type="NCBIfam" id="NF008427">
    <property type="entry name" value="PRK11263.1"/>
    <property type="match status" value="1"/>
</dbReference>
<dbReference type="PANTHER" id="PTHR21248">
    <property type="entry name" value="CARDIOLIPIN SYNTHASE"/>
    <property type="match status" value="1"/>
</dbReference>
<dbReference type="PANTHER" id="PTHR21248:SF23">
    <property type="entry name" value="CARDIOLIPIN SYNTHASE B"/>
    <property type="match status" value="1"/>
</dbReference>
<dbReference type="Pfam" id="PF13091">
    <property type="entry name" value="PLDc_2"/>
    <property type="match status" value="2"/>
</dbReference>
<dbReference type="SMART" id="SM00155">
    <property type="entry name" value="PLDc"/>
    <property type="match status" value="2"/>
</dbReference>
<dbReference type="SUPFAM" id="SSF56024">
    <property type="entry name" value="Phospholipase D/nuclease"/>
    <property type="match status" value="2"/>
</dbReference>
<dbReference type="PROSITE" id="PS50035">
    <property type="entry name" value="PLD"/>
    <property type="match status" value="2"/>
</dbReference>
<evidence type="ECO:0000255" key="1">
    <source>
        <dbReference type="HAMAP-Rule" id="MF_01917"/>
    </source>
</evidence>
<evidence type="ECO:0000256" key="2">
    <source>
        <dbReference type="SAM" id="MobiDB-lite"/>
    </source>
</evidence>
<evidence type="ECO:0000269" key="3">
    <source>
    </source>
</evidence>
<evidence type="ECO:0000269" key="4">
    <source>
    </source>
</evidence>
<evidence type="ECO:0000303" key="5">
    <source>
    </source>
</evidence>
<evidence type="ECO:0000305" key="6">
    <source>
    </source>
</evidence>
<evidence type="ECO:0000305" key="7">
    <source>
    </source>
</evidence>
<keyword id="KW-1003">Cell membrane</keyword>
<keyword id="KW-0444">Lipid biosynthesis</keyword>
<keyword id="KW-0443">Lipid metabolism</keyword>
<keyword id="KW-0472">Membrane</keyword>
<keyword id="KW-0594">Phospholipid biosynthesis</keyword>
<keyword id="KW-1208">Phospholipid metabolism</keyword>
<keyword id="KW-1185">Reference proteome</keyword>
<keyword id="KW-0677">Repeat</keyword>
<keyword id="KW-0808">Transferase</keyword>
<gene>
    <name evidence="1 5" type="primary">clsB</name>
    <name type="synonym">ybhO</name>
    <name type="ordered locus">b0789</name>
    <name type="ordered locus">JW0772</name>
</gene>
<organism>
    <name type="scientific">Escherichia coli (strain K12)</name>
    <dbReference type="NCBI Taxonomy" id="83333"/>
    <lineage>
        <taxon>Bacteria</taxon>
        <taxon>Pseudomonadati</taxon>
        <taxon>Pseudomonadota</taxon>
        <taxon>Gammaproteobacteria</taxon>
        <taxon>Enterobacterales</taxon>
        <taxon>Enterobacteriaceae</taxon>
        <taxon>Escherichia</taxon>
    </lineage>
</organism>
<protein>
    <recommendedName>
        <fullName evidence="1">Cardiolipin synthase B</fullName>
        <shortName evidence="1">CL synthase</shortName>
        <ecNumber evidence="1 3">2.7.8.-</ecNumber>
    </recommendedName>
</protein>
<feature type="chain" id="PRO_0000201283" description="Cardiolipin synthase B">
    <location>
        <begin position="1"/>
        <end position="413"/>
    </location>
</feature>
<feature type="domain" description="PLD phosphodiesterase 1" evidence="1">
    <location>
        <begin position="108"/>
        <end position="135"/>
    </location>
</feature>
<feature type="domain" description="PLD phosphodiesterase 2" evidence="1">
    <location>
        <begin position="285"/>
        <end position="312"/>
    </location>
</feature>
<feature type="region of interest" description="Disordered" evidence="2">
    <location>
        <begin position="390"/>
        <end position="413"/>
    </location>
</feature>
<feature type="active site" evidence="1">
    <location>
        <position position="113"/>
    </location>
</feature>
<feature type="active site" evidence="1">
    <location>
        <position position="115"/>
    </location>
</feature>
<feature type="active site" evidence="1">
    <location>
        <position position="120"/>
    </location>
</feature>
<feature type="active site" evidence="1">
    <location>
        <position position="290"/>
    </location>
</feature>
<feature type="active site" evidence="1">
    <location>
        <position position="292"/>
    </location>
</feature>
<feature type="active site" evidence="1">
    <location>
        <position position="297"/>
    </location>
</feature>
<sequence length="413" mass="47634">MKCSWREGNKIQLLENGEQYYPAVFKAIGEAQERIILETFIWFEDDVGKQLHAALLAAAQRGVKAEVLLDGYGSPDLSDEFVNELTAAGVVFRYYDPRPRLFGMRTNVFRRMHRKIVVIDARIAFIGGLNYSAEHMSSYGPEAKQDYAVRLEGPIVEDILQFELENLPGQSAARRWWRRHHKAEENRQPGEAQVLLVWRDNEEHRDDIERHYLKMLTQARREVIIANAYFFPGYRFLHALRKAARRGVRIKLIIQGEPDMPIVRVGARLLYNYLVKGGVQVFEYRRRPLHGKVALMDDHWATVGSSNLDPLSLSLNLEANVIIHDRHFNQTLRDNLNGIIAADCQQVDETMLPKRTWWNLTKSVLAFHFLRHFPALVGWLPAHTPRLAQVDPPAQPTMETQDRVETENTGVKP</sequence>
<reference key="1">
    <citation type="journal article" date="1996" name="DNA Res.">
        <title>A 718-kb DNA sequence of the Escherichia coli K-12 genome corresponding to the 12.7-28.0 min region on the linkage map.</title>
        <authorList>
            <person name="Oshima T."/>
            <person name="Aiba H."/>
            <person name="Baba T."/>
            <person name="Fujita K."/>
            <person name="Hayashi K."/>
            <person name="Honjo A."/>
            <person name="Ikemoto K."/>
            <person name="Inada T."/>
            <person name="Itoh T."/>
            <person name="Kajihara M."/>
            <person name="Kanai K."/>
            <person name="Kashimoto K."/>
            <person name="Kimura S."/>
            <person name="Kitagawa M."/>
            <person name="Makino K."/>
            <person name="Masuda S."/>
            <person name="Miki T."/>
            <person name="Mizobuchi K."/>
            <person name="Mori H."/>
            <person name="Motomura K."/>
            <person name="Nakamura Y."/>
            <person name="Nashimoto H."/>
            <person name="Nishio Y."/>
            <person name="Saito N."/>
            <person name="Sampei G."/>
            <person name="Seki Y."/>
            <person name="Tagami H."/>
            <person name="Takemoto K."/>
            <person name="Wada C."/>
            <person name="Yamamoto Y."/>
            <person name="Yano M."/>
            <person name="Horiuchi T."/>
        </authorList>
    </citation>
    <scope>NUCLEOTIDE SEQUENCE [LARGE SCALE GENOMIC DNA]</scope>
    <source>
        <strain>K12 / W3110 / ATCC 27325 / DSM 5911</strain>
    </source>
</reference>
<reference key="2">
    <citation type="journal article" date="1997" name="Science">
        <title>The complete genome sequence of Escherichia coli K-12.</title>
        <authorList>
            <person name="Blattner F.R."/>
            <person name="Plunkett G. III"/>
            <person name="Bloch C.A."/>
            <person name="Perna N.T."/>
            <person name="Burland V."/>
            <person name="Riley M."/>
            <person name="Collado-Vides J."/>
            <person name="Glasner J.D."/>
            <person name="Rode C.K."/>
            <person name="Mayhew G.F."/>
            <person name="Gregor J."/>
            <person name="Davis N.W."/>
            <person name="Kirkpatrick H.A."/>
            <person name="Goeden M.A."/>
            <person name="Rose D.J."/>
            <person name="Mau B."/>
            <person name="Shao Y."/>
        </authorList>
    </citation>
    <scope>NUCLEOTIDE SEQUENCE [LARGE SCALE GENOMIC DNA]</scope>
    <source>
        <strain>K12 / MG1655 / ATCC 47076</strain>
    </source>
</reference>
<reference key="3">
    <citation type="journal article" date="2006" name="Mol. Syst. Biol.">
        <title>Highly accurate genome sequences of Escherichia coli K-12 strains MG1655 and W3110.</title>
        <authorList>
            <person name="Hayashi K."/>
            <person name="Morooka N."/>
            <person name="Yamamoto Y."/>
            <person name="Fujita K."/>
            <person name="Isono K."/>
            <person name="Choi S."/>
            <person name="Ohtsubo E."/>
            <person name="Baba T."/>
            <person name="Wanner B.L."/>
            <person name="Mori H."/>
            <person name="Horiuchi T."/>
        </authorList>
    </citation>
    <scope>NUCLEOTIDE SEQUENCE [LARGE SCALE GENOMIC DNA]</scope>
    <source>
        <strain>K12 / W3110 / ATCC 27325 / DSM 5911</strain>
    </source>
</reference>
<reference key="4">
    <citation type="journal article" date="2000" name="Biochim. Biophys. Acta">
        <title>A second Escherichia coli protein with CL synthase activity.</title>
        <authorList>
            <person name="Guo D."/>
            <person name="Tropp B.E."/>
        </authorList>
    </citation>
    <scope>FUNCTION AS A CL SYNTHASE</scope>
    <scope>CATALYTIC ACTIVITY</scope>
    <scope>ACTIVITY REGULATION</scope>
    <scope>SUBCELLULAR LOCATION</scope>
    <source>
        <strain>ATCC 33694 / HB101</strain>
    </source>
</reference>
<reference key="5">
    <citation type="journal article" date="2012" name="Proc. Natl. Acad. Sci. U.S.A.">
        <title>Discovery of a cardiolipin synthase utilizing phosphatidylethanolamine and phosphatidylglycerol as substrates.</title>
        <authorList>
            <person name="Tan B.K."/>
            <person name="Bogdanov M."/>
            <person name="Zhao J."/>
            <person name="Dowhan W."/>
            <person name="Raetz C.R."/>
            <person name="Guan Z."/>
        </authorList>
    </citation>
    <scope>FUNCTION</scope>
    <scope>DISRUPTION PHENOTYPE</scope>
    <scope>GENE NAME</scope>
</reference>
<proteinExistence type="evidence at protein level"/>
<comment type="function">
    <text evidence="1 3 4">Catalyzes the phosphatidyl group transfer from one phosphatidylglycerol molecule to another to form cardiolipin (CL) (diphosphatidylglycerol) and glycerol. Can also catalyze phosphatidyl group transfer to water to form phosphatidate.</text>
</comment>
<comment type="catalytic activity">
    <reaction evidence="1 3">
        <text>2 a 1,2-diacyl-sn-glycero-3-phospho-(1'-sn-glycerol) = a cardiolipin + glycerol</text>
        <dbReference type="Rhea" id="RHEA:31451"/>
        <dbReference type="ChEBI" id="CHEBI:17754"/>
        <dbReference type="ChEBI" id="CHEBI:62237"/>
        <dbReference type="ChEBI" id="CHEBI:64716"/>
    </reaction>
</comment>
<comment type="activity regulation">
    <text evidence="3">Activated by phosphate. Inhibited by cardiolipin and phosphatidate.</text>
</comment>
<comment type="subcellular location">
    <subcellularLocation>
        <location evidence="6">Cell membrane</location>
        <topology evidence="6">Peripheral membrane protein</topology>
    </subcellularLocation>
</comment>
<comment type="disruption phenotype">
    <text evidence="4">Triple deletion of clsA, clsB and clsC results in a complete lack of cardiolipin, regardless of growth phase or growth conditions.</text>
</comment>
<comment type="miscellaneous">
    <text evidence="7">All three cardiolipin synthases (ClsA, ClsB and ClsC) contribute to CL synthesis in stationary phase. Only ClsA contributes to synthesis during logarithmic growth phase.</text>
</comment>
<comment type="similarity">
    <text evidence="1">Belongs to the phospholipase D family. Cardiolipin synthase subfamily. ClsB sub-subfamily.</text>
</comment>
<accession>P0AA84</accession>
<accession>P75771</accession>
<name>CLSB_ECOLI</name>